<proteinExistence type="evidence at transcript level"/>
<sequence>MPREDRATWKSNYFLKIIQLLDDYPKCFIVGADNVGSKQMQQIRMSLRGKAVVLMGKNTMMRKAIRGHLENNPALEKLLPHIRGNVGFVFTKEDLTEIRDMLLANKVPAAARAGAIAPCEVTVPAQNTGLGPEKTSFFQALGITTKISRGTIEILSDVQLIKTGDKVGASEATLLNMLNISPFSFGLVIQQVFDNGSIYNPEVLDITEETLHSRFLEGVRNVASVCLQIGYPTVASVPHSIINGYKRVLALSVETDYTFPLAEKVKAFLADPSAFVAAAPVAAAPAAAPAATTAAPAKVEAKEESEESDEDMGFGLFD</sequence>
<comment type="function">
    <text>Ribosomal protein P0 is the functional equivalent of E.coli protein L10.</text>
</comment>
<comment type="subunit">
    <text evidence="1">P0 forms a pentameric complex by interaction with dimers of P1 and P2. Identified in a IGF2BP1-dependent mRNP granule complex containing untranslated mRNAs. Interacts with APEX1. Interacts with FMR1.</text>
</comment>
<comment type="subcellular location">
    <subcellularLocation>
        <location evidence="1">Nucleus</location>
    </subcellularLocation>
    <subcellularLocation>
        <location evidence="1">Cytoplasm</location>
    </subcellularLocation>
    <text evidence="1">Localized in cytoplasmic mRNP granules containing untranslated mRNAs.</text>
</comment>
<comment type="PTM">
    <text evidence="1">Ubiquitinated at Lys-264 by RNF14 and RNF25 in response to ribosome collisions (ribosome stalling).</text>
</comment>
<comment type="similarity">
    <text evidence="4">Belongs to the universal ribosomal protein uL10 family.</text>
</comment>
<dbReference type="EMBL" id="BT021080">
    <property type="protein sequence ID" value="AAX09097.1"/>
    <property type="molecule type" value="mRNA"/>
</dbReference>
<dbReference type="EMBL" id="BC102074">
    <property type="protein sequence ID" value="AAI02075.1"/>
    <property type="molecule type" value="mRNA"/>
</dbReference>
<dbReference type="EMBL" id="U75275">
    <property type="protein sequence ID" value="AAB17671.1"/>
    <property type="molecule type" value="mRNA"/>
</dbReference>
<dbReference type="EMBL" id="AF013214">
    <property type="protein sequence ID" value="AAB65436.1"/>
    <property type="molecule type" value="mRNA"/>
</dbReference>
<dbReference type="RefSeq" id="NP_001012700.1">
    <property type="nucleotide sequence ID" value="NM_001012682.1"/>
</dbReference>
<dbReference type="SMR" id="Q95140"/>
<dbReference type="FunCoup" id="Q95140">
    <property type="interactions" value="2248"/>
</dbReference>
<dbReference type="IntAct" id="Q95140">
    <property type="interactions" value="2"/>
</dbReference>
<dbReference type="MINT" id="Q95140"/>
<dbReference type="STRING" id="9913.ENSBTAP00000048183"/>
<dbReference type="PaxDb" id="9913-ENSBTAP00000048183"/>
<dbReference type="PeptideAtlas" id="Q95140"/>
<dbReference type="GeneID" id="286868"/>
<dbReference type="KEGG" id="bta:286868"/>
<dbReference type="CTD" id="6175"/>
<dbReference type="eggNOG" id="KOG0815">
    <property type="taxonomic scope" value="Eukaryota"/>
</dbReference>
<dbReference type="InParanoid" id="Q95140"/>
<dbReference type="OrthoDB" id="10259902at2759"/>
<dbReference type="Proteomes" id="UP000009136">
    <property type="component" value="Unplaced"/>
</dbReference>
<dbReference type="GO" id="GO:0005737">
    <property type="term" value="C:cytoplasm"/>
    <property type="evidence" value="ECO:0000250"/>
    <property type="project" value="UniProtKB"/>
</dbReference>
<dbReference type="GO" id="GO:0022625">
    <property type="term" value="C:cytosolic large ribosomal subunit"/>
    <property type="evidence" value="ECO:0000318"/>
    <property type="project" value="GO_Central"/>
</dbReference>
<dbReference type="GO" id="GO:0005634">
    <property type="term" value="C:nucleus"/>
    <property type="evidence" value="ECO:0000250"/>
    <property type="project" value="UniProtKB"/>
</dbReference>
<dbReference type="GO" id="GO:1990904">
    <property type="term" value="C:ribonucleoprotein complex"/>
    <property type="evidence" value="ECO:0000250"/>
    <property type="project" value="UniProtKB"/>
</dbReference>
<dbReference type="GO" id="GO:0070180">
    <property type="term" value="F:large ribosomal subunit rRNA binding"/>
    <property type="evidence" value="ECO:0000318"/>
    <property type="project" value="GO_Central"/>
</dbReference>
<dbReference type="GO" id="GO:0003735">
    <property type="term" value="F:structural constituent of ribosome"/>
    <property type="evidence" value="ECO:0000318"/>
    <property type="project" value="GO_Central"/>
</dbReference>
<dbReference type="GO" id="GO:0002181">
    <property type="term" value="P:cytoplasmic translation"/>
    <property type="evidence" value="ECO:0000318"/>
    <property type="project" value="GO_Central"/>
</dbReference>
<dbReference type="GO" id="GO:0042254">
    <property type="term" value="P:ribosome biogenesis"/>
    <property type="evidence" value="ECO:0007669"/>
    <property type="project" value="InterPro"/>
</dbReference>
<dbReference type="CDD" id="cd05795">
    <property type="entry name" value="Ribosomal_P0_L10e"/>
    <property type="match status" value="1"/>
</dbReference>
<dbReference type="FunFam" id="3.30.70.1730:FF:000002">
    <property type="entry name" value="60S acidic ribosomal protein P0"/>
    <property type="match status" value="1"/>
</dbReference>
<dbReference type="FunFam" id="3.90.105.20:FF:000001">
    <property type="entry name" value="60S acidic ribosomal protein P0"/>
    <property type="match status" value="1"/>
</dbReference>
<dbReference type="Gene3D" id="3.30.70.1730">
    <property type="match status" value="1"/>
</dbReference>
<dbReference type="Gene3D" id="3.90.105.20">
    <property type="match status" value="1"/>
</dbReference>
<dbReference type="InterPro" id="IPR050323">
    <property type="entry name" value="Ribosomal_protein_uL10"/>
</dbReference>
<dbReference type="InterPro" id="IPR001790">
    <property type="entry name" value="Ribosomal_uL10"/>
</dbReference>
<dbReference type="InterPro" id="IPR040637">
    <property type="entry name" value="Ribosomal_uL10-like_insert"/>
</dbReference>
<dbReference type="InterPro" id="IPR043164">
    <property type="entry name" value="Ribosomal_uL10-like_insert_sf"/>
</dbReference>
<dbReference type="InterPro" id="IPR043141">
    <property type="entry name" value="Ribosomal_uL10-like_sf"/>
</dbReference>
<dbReference type="InterPro" id="IPR030670">
    <property type="entry name" value="uL10_eukaryotes"/>
</dbReference>
<dbReference type="PANTHER" id="PTHR45699">
    <property type="entry name" value="60S ACIDIC RIBOSOMAL PROTEIN P0"/>
    <property type="match status" value="1"/>
</dbReference>
<dbReference type="PANTHER" id="PTHR45699:SF3">
    <property type="entry name" value="LARGE RIBOSOMAL SUBUNIT PROTEIN UL10"/>
    <property type="match status" value="1"/>
</dbReference>
<dbReference type="Pfam" id="PF00428">
    <property type="entry name" value="Ribosomal_60s"/>
    <property type="match status" value="1"/>
</dbReference>
<dbReference type="Pfam" id="PF00466">
    <property type="entry name" value="Ribosomal_L10"/>
    <property type="match status" value="1"/>
</dbReference>
<dbReference type="Pfam" id="PF17777">
    <property type="entry name" value="RL10P_insert"/>
    <property type="match status" value="1"/>
</dbReference>
<dbReference type="PIRSF" id="PIRSF039087">
    <property type="entry name" value="L10E"/>
    <property type="match status" value="1"/>
</dbReference>
<dbReference type="SUPFAM" id="SSF160369">
    <property type="entry name" value="Ribosomal protein L10-like"/>
    <property type="match status" value="1"/>
</dbReference>
<organism>
    <name type="scientific">Bos taurus</name>
    <name type="common">Bovine</name>
    <dbReference type="NCBI Taxonomy" id="9913"/>
    <lineage>
        <taxon>Eukaryota</taxon>
        <taxon>Metazoa</taxon>
        <taxon>Chordata</taxon>
        <taxon>Craniata</taxon>
        <taxon>Vertebrata</taxon>
        <taxon>Euteleostomi</taxon>
        <taxon>Mammalia</taxon>
        <taxon>Eutheria</taxon>
        <taxon>Laurasiatheria</taxon>
        <taxon>Artiodactyla</taxon>
        <taxon>Ruminantia</taxon>
        <taxon>Pecora</taxon>
        <taxon>Bovidae</taxon>
        <taxon>Bovinae</taxon>
        <taxon>Bos</taxon>
    </lineage>
</organism>
<reference key="1">
    <citation type="journal article" date="2005" name="BMC Genomics">
        <title>Characterization of 954 bovine full-CDS cDNA sequences.</title>
        <authorList>
            <person name="Harhay G.P."/>
            <person name="Sonstegard T.S."/>
            <person name="Keele J.W."/>
            <person name="Heaton M.P."/>
            <person name="Clawson M.L."/>
            <person name="Snelling W.M."/>
            <person name="Wiedmann R.T."/>
            <person name="Van Tassell C.P."/>
            <person name="Smith T.P.L."/>
        </authorList>
    </citation>
    <scope>NUCLEOTIDE SEQUENCE [LARGE SCALE MRNA]</scope>
</reference>
<reference key="2">
    <citation type="submission" date="2005-08" db="EMBL/GenBank/DDBJ databases">
        <authorList>
            <consortium name="NIH - Mammalian Gene Collection (MGC) project"/>
        </authorList>
    </citation>
    <scope>NUCLEOTIDE SEQUENCE [LARGE SCALE MRNA]</scope>
    <source>
        <strain>Crossbred X Angus</strain>
        <tissue>Ileum</tissue>
    </source>
</reference>
<reference key="3">
    <citation type="submission" date="1996-10" db="EMBL/GenBank/DDBJ databases">
        <authorList>
            <person name="Mandriota S.J."/>
            <person name="Pepper M.S."/>
        </authorList>
    </citation>
    <scope>NUCLEOTIDE SEQUENCE [MRNA] OF 10-59</scope>
    <source>
        <tissue>Adrenal cortex</tissue>
    </source>
</reference>
<reference key="4">
    <citation type="submission" date="1997-07" db="EMBL/GenBank/DDBJ databases">
        <authorList>
            <person name="Lileinsiek B."/>
            <person name="Rocha M."/>
            <person name="Umansky V."/>
            <person name="Benner A."/>
            <person name="Lin Y."/>
            <person name="Ziegler R."/>
            <person name="Nawroth P.P."/>
            <person name="Schirrmacher V."/>
        </authorList>
    </citation>
    <scope>NUCLEOTIDE SEQUENCE [MRNA] OF 17-318</scope>
    <source>
        <tissue>Aorta</tissue>
    </source>
</reference>
<gene>
    <name type="primary">RPLP0</name>
</gene>
<name>RLA0_BOVIN</name>
<feature type="chain" id="PRO_0000154757" description="Large ribosomal subunit protein uL10">
    <location>
        <begin position="1"/>
        <end position="318"/>
    </location>
</feature>
<feature type="region of interest" description="Disordered" evidence="3">
    <location>
        <begin position="293"/>
        <end position="318"/>
    </location>
</feature>
<feature type="compositionally biased region" description="Acidic residues" evidence="3">
    <location>
        <begin position="303"/>
        <end position="312"/>
    </location>
</feature>
<feature type="modified residue" description="Phosphotyrosine" evidence="2">
    <location>
        <position position="24"/>
    </location>
</feature>
<feature type="modified residue" description="Phosphothreonine" evidence="1">
    <location>
        <position position="59"/>
    </location>
</feature>
<feature type="modified residue" description="Phosphoserine" evidence="1">
    <location>
        <position position="305"/>
    </location>
</feature>
<feature type="modified residue" description="Phosphoserine" evidence="1">
    <location>
        <position position="308"/>
    </location>
</feature>
<feature type="cross-link" description="Glycyl lysine isopeptide (Lys-Gly) (interchain with G-Cter in ubiquitin)" evidence="1">
    <location>
        <position position="264"/>
    </location>
</feature>
<feature type="cross-link" description="Glycyl lysine isopeptide (Lys-Gly) (interchain with G-Cter in SUMO1); alternate" evidence="1">
    <location>
        <position position="298"/>
    </location>
</feature>
<feature type="cross-link" description="Glycyl lysine isopeptide (Lys-Gly) (interchain with G-Cter in SUMO2); alternate" evidence="1">
    <location>
        <position position="298"/>
    </location>
</feature>
<feature type="sequence conflict" description="In Ref. 4; AAB65436." evidence="4" ref="4">
    <original>V</original>
    <variation>E</variation>
    <location>
        <position position="167"/>
    </location>
</feature>
<feature type="sequence conflict" description="In Ref. 2; AAI02075." evidence="4" ref="2">
    <original>A</original>
    <variation>T</variation>
    <location>
        <position position="286"/>
    </location>
</feature>
<keyword id="KW-0963">Cytoplasm</keyword>
<keyword id="KW-1017">Isopeptide bond</keyword>
<keyword id="KW-0539">Nucleus</keyword>
<keyword id="KW-0597">Phosphoprotein</keyword>
<keyword id="KW-1185">Reference proteome</keyword>
<keyword id="KW-0687">Ribonucleoprotein</keyword>
<keyword id="KW-0689">Ribosomal protein</keyword>
<keyword id="KW-0832">Ubl conjugation</keyword>
<accession>Q95140</accession>
<accession>O18788</accession>
<accession>Q3T182</accession>
<accession>Q5E940</accession>
<evidence type="ECO:0000250" key="1">
    <source>
        <dbReference type="UniProtKB" id="P05388"/>
    </source>
</evidence>
<evidence type="ECO:0000250" key="2">
    <source>
        <dbReference type="UniProtKB" id="P14869"/>
    </source>
</evidence>
<evidence type="ECO:0000256" key="3">
    <source>
        <dbReference type="SAM" id="MobiDB-lite"/>
    </source>
</evidence>
<evidence type="ECO:0000305" key="4"/>
<protein>
    <recommendedName>
        <fullName evidence="4">Large ribosomal subunit protein uL10</fullName>
    </recommendedName>
    <alternativeName>
        <fullName>60S acidic ribosomal protein P0</fullName>
    </alternativeName>
    <alternativeName>
        <fullName>60S ribosomal protein L10E</fullName>
    </alternativeName>
</protein>